<name>LPXB_THIDA</name>
<gene>
    <name evidence="1" type="primary">lpxB</name>
    <name type="ordered locus">Tbd_0798</name>
</gene>
<keyword id="KW-0328">Glycosyltransferase</keyword>
<keyword id="KW-0441">Lipid A biosynthesis</keyword>
<keyword id="KW-0444">Lipid biosynthesis</keyword>
<keyword id="KW-0443">Lipid metabolism</keyword>
<keyword id="KW-1185">Reference proteome</keyword>
<keyword id="KW-0808">Transferase</keyword>
<evidence type="ECO:0000255" key="1">
    <source>
        <dbReference type="HAMAP-Rule" id="MF_00392"/>
    </source>
</evidence>
<protein>
    <recommendedName>
        <fullName evidence="1">Lipid-A-disaccharide synthase</fullName>
        <ecNumber evidence="1">2.4.1.182</ecNumber>
    </recommendedName>
</protein>
<dbReference type="EC" id="2.4.1.182" evidence="1"/>
<dbReference type="EMBL" id="CP000116">
    <property type="protein sequence ID" value="AAZ96751.1"/>
    <property type="molecule type" value="Genomic_DNA"/>
</dbReference>
<dbReference type="RefSeq" id="WP_011311310.1">
    <property type="nucleotide sequence ID" value="NC_007404.1"/>
</dbReference>
<dbReference type="SMR" id="Q3SKM8"/>
<dbReference type="STRING" id="292415.Tbd_0798"/>
<dbReference type="CAZy" id="GT19">
    <property type="family name" value="Glycosyltransferase Family 19"/>
</dbReference>
<dbReference type="KEGG" id="tbd:Tbd_0798"/>
<dbReference type="eggNOG" id="COG0763">
    <property type="taxonomic scope" value="Bacteria"/>
</dbReference>
<dbReference type="HOGENOM" id="CLU_036577_3_1_4"/>
<dbReference type="OrthoDB" id="9801642at2"/>
<dbReference type="UniPathway" id="UPA00973"/>
<dbReference type="Proteomes" id="UP000008291">
    <property type="component" value="Chromosome"/>
</dbReference>
<dbReference type="GO" id="GO:0016020">
    <property type="term" value="C:membrane"/>
    <property type="evidence" value="ECO:0007669"/>
    <property type="project" value="GOC"/>
</dbReference>
<dbReference type="GO" id="GO:0008915">
    <property type="term" value="F:lipid-A-disaccharide synthase activity"/>
    <property type="evidence" value="ECO:0007669"/>
    <property type="project" value="UniProtKB-UniRule"/>
</dbReference>
<dbReference type="GO" id="GO:0005543">
    <property type="term" value="F:phospholipid binding"/>
    <property type="evidence" value="ECO:0007669"/>
    <property type="project" value="TreeGrafter"/>
</dbReference>
<dbReference type="GO" id="GO:0009245">
    <property type="term" value="P:lipid A biosynthetic process"/>
    <property type="evidence" value="ECO:0007669"/>
    <property type="project" value="UniProtKB-UniRule"/>
</dbReference>
<dbReference type="Gene3D" id="3.40.50.2000">
    <property type="entry name" value="Glycogen Phosphorylase B"/>
    <property type="match status" value="1"/>
</dbReference>
<dbReference type="HAMAP" id="MF_00392">
    <property type="entry name" value="LpxB"/>
    <property type="match status" value="1"/>
</dbReference>
<dbReference type="InterPro" id="IPR003835">
    <property type="entry name" value="Glyco_trans_19"/>
</dbReference>
<dbReference type="NCBIfam" id="TIGR00215">
    <property type="entry name" value="lpxB"/>
    <property type="match status" value="1"/>
</dbReference>
<dbReference type="PANTHER" id="PTHR30372">
    <property type="entry name" value="LIPID-A-DISACCHARIDE SYNTHASE"/>
    <property type="match status" value="1"/>
</dbReference>
<dbReference type="PANTHER" id="PTHR30372:SF4">
    <property type="entry name" value="LIPID-A-DISACCHARIDE SYNTHASE, MITOCHONDRIAL-RELATED"/>
    <property type="match status" value="1"/>
</dbReference>
<dbReference type="Pfam" id="PF02684">
    <property type="entry name" value="LpxB"/>
    <property type="match status" value="1"/>
</dbReference>
<dbReference type="SUPFAM" id="SSF53756">
    <property type="entry name" value="UDP-Glycosyltransferase/glycogen phosphorylase"/>
    <property type="match status" value="1"/>
</dbReference>
<feature type="chain" id="PRO_0000255229" description="Lipid-A-disaccharide synthase">
    <location>
        <begin position="1"/>
        <end position="372"/>
    </location>
</feature>
<sequence>MVAGEASGDLLGAHFFDALKKNRPGLTAAGIAGPRMVEAGVKAIYPSEKLAVNGYVEVLRHLPELLWIRARITRHFLRERPRVFVGIDAPDFNFTLEAALKRAGVPTIHFVSPSIWAWRPERIERIKQAVSHMLVVFPFEEAIYRDAGIPVSYVGHPLADVIPLQAPTGAARATLGLGDGPIVALLPGSRLSEVDRHARLMLEAAMQVRAKEMDVRFVLPAASEAARERIARAAQGLDLPLTVLAGRSHQALAACDVAVVASGTATLEAALFKKPMVITYRVPALTARLMRKKALLPWIGLPNILARDFVVPERVQEAATPDALAADVLAWLGDAARRAALAVTFDALHRDLRQGASARIAAAIAPYLEAAR</sequence>
<accession>Q3SKM8</accession>
<organism>
    <name type="scientific">Thiobacillus denitrificans (strain ATCC 25259 / T1)</name>
    <dbReference type="NCBI Taxonomy" id="292415"/>
    <lineage>
        <taxon>Bacteria</taxon>
        <taxon>Pseudomonadati</taxon>
        <taxon>Pseudomonadota</taxon>
        <taxon>Betaproteobacteria</taxon>
        <taxon>Nitrosomonadales</taxon>
        <taxon>Thiobacillaceae</taxon>
        <taxon>Thiobacillus</taxon>
    </lineage>
</organism>
<proteinExistence type="inferred from homology"/>
<comment type="function">
    <text evidence="1">Condensation of UDP-2,3-diacylglucosamine and 2,3-diacylglucosamine-1-phosphate to form lipid A disaccharide, a precursor of lipid A, a phosphorylated glycolipid that anchors the lipopolysaccharide to the outer membrane of the cell.</text>
</comment>
<comment type="catalytic activity">
    <reaction evidence="1">
        <text>a lipid X + a UDP-2-N,3-O-bis[(3R)-3-hydroxyacyl]-alpha-D-glucosamine = a lipid A disaccharide + UDP + H(+)</text>
        <dbReference type="Rhea" id="RHEA:67828"/>
        <dbReference type="ChEBI" id="CHEBI:15378"/>
        <dbReference type="ChEBI" id="CHEBI:58223"/>
        <dbReference type="ChEBI" id="CHEBI:137748"/>
        <dbReference type="ChEBI" id="CHEBI:176338"/>
        <dbReference type="ChEBI" id="CHEBI:176343"/>
        <dbReference type="EC" id="2.4.1.182"/>
    </reaction>
</comment>
<comment type="pathway">
    <text evidence="1">Bacterial outer membrane biogenesis; LPS lipid A biosynthesis.</text>
</comment>
<comment type="similarity">
    <text evidence="1">Belongs to the LpxB family.</text>
</comment>
<reference key="1">
    <citation type="journal article" date="2006" name="J. Bacteriol.">
        <title>The genome sequence of the obligately chemolithoautotrophic, facultatively anaerobic bacterium Thiobacillus denitrificans.</title>
        <authorList>
            <person name="Beller H.R."/>
            <person name="Chain P.S."/>
            <person name="Letain T.E."/>
            <person name="Chakicherla A."/>
            <person name="Larimer F.W."/>
            <person name="Richardson P.M."/>
            <person name="Coleman M.A."/>
            <person name="Wood A.P."/>
            <person name="Kelly D.P."/>
        </authorList>
    </citation>
    <scope>NUCLEOTIDE SEQUENCE [LARGE SCALE GENOMIC DNA]</scope>
    <source>
        <strain>ATCC 25259 / T1</strain>
    </source>
</reference>